<name>EX7L_LEPBJ</name>
<protein>
    <recommendedName>
        <fullName evidence="1">Exodeoxyribonuclease 7 large subunit</fullName>
        <ecNumber evidence="1">3.1.11.6</ecNumber>
    </recommendedName>
    <alternativeName>
        <fullName evidence="1">Exodeoxyribonuclease VII large subunit</fullName>
        <shortName evidence="1">Exonuclease VII large subunit</shortName>
    </alternativeName>
</protein>
<comment type="function">
    <text evidence="1">Bidirectionally degrades single-stranded DNA into large acid-insoluble oligonucleotides, which are then degraded further into small acid-soluble oligonucleotides.</text>
</comment>
<comment type="catalytic activity">
    <reaction evidence="1">
        <text>Exonucleolytic cleavage in either 5'- to 3'- or 3'- to 5'-direction to yield nucleoside 5'-phosphates.</text>
        <dbReference type="EC" id="3.1.11.6"/>
    </reaction>
</comment>
<comment type="subunit">
    <text evidence="1">Heterooligomer composed of large and small subunits.</text>
</comment>
<comment type="subcellular location">
    <subcellularLocation>
        <location evidence="1">Cytoplasm</location>
    </subcellularLocation>
</comment>
<comment type="similarity">
    <text evidence="1">Belongs to the XseA family.</text>
</comment>
<accession>Q04TB1</accession>
<sequence length="422" mass="47095">MEDSKPLTVSEVTRILKNLITGSKDLKNIWVRGEISNYSKASSGHIYFSLKDSSSLMRCTFFNYSNKNYSGKPLSDGKEVQVYGTVTLYEAGGSYNLNVARVEELGQGDILLQIEKLKQKLAAEGIFDPERKRRIPSFPKTLGIATSPSGAAIEDIIKIARSRFPGINILISPCFVQGDEAPDSIVAAIEELNHPSWGVDVIIAGRGGGSFEDLMAFNDEKVVRAYANSRIPIISAVGHQTDVLLSDFAADYSTPTPTAAAEYAVPKEEDVLQFLTQLEGRLKTSLLAKISSSKDRLRLLSGKFIFKEPMQLLNQRNQRVDEIGVRLQKAVFNKVGLARVRLERYEDLTSRMRNIFFHKKQKAEFWTTKVEDLSPPATMKRGYSILRNQKGKIIRSPEETKPEEELQVLLSGGTMQVIRKGK</sequence>
<reference key="1">
    <citation type="journal article" date="2006" name="Proc. Natl. Acad. Sci. U.S.A.">
        <title>Genome reduction in Leptospira borgpetersenii reflects limited transmission potential.</title>
        <authorList>
            <person name="Bulach D.M."/>
            <person name="Zuerner R.L."/>
            <person name="Wilson P."/>
            <person name="Seemann T."/>
            <person name="McGrath A."/>
            <person name="Cullen P.A."/>
            <person name="Davis J."/>
            <person name="Johnson M."/>
            <person name="Kuczek E."/>
            <person name="Alt D.P."/>
            <person name="Peterson-Burch B."/>
            <person name="Coppel R.L."/>
            <person name="Rood J.I."/>
            <person name="Davies J.K."/>
            <person name="Adler B."/>
        </authorList>
    </citation>
    <scope>NUCLEOTIDE SEQUENCE [LARGE SCALE GENOMIC DNA]</scope>
    <source>
        <strain>JB197</strain>
    </source>
</reference>
<proteinExistence type="inferred from homology"/>
<evidence type="ECO:0000255" key="1">
    <source>
        <dbReference type="HAMAP-Rule" id="MF_00378"/>
    </source>
</evidence>
<feature type="chain" id="PRO_0000303795" description="Exodeoxyribonuclease 7 large subunit">
    <location>
        <begin position="1"/>
        <end position="422"/>
    </location>
</feature>
<gene>
    <name evidence="1" type="primary">xseA</name>
    <name type="ordered locus">LBJ_1274</name>
</gene>
<dbReference type="EC" id="3.1.11.6" evidence="1"/>
<dbReference type="EMBL" id="CP000350">
    <property type="protein sequence ID" value="ABJ75859.1"/>
    <property type="molecule type" value="Genomic_DNA"/>
</dbReference>
<dbReference type="RefSeq" id="WP_011670154.1">
    <property type="nucleotide sequence ID" value="NC_008510.1"/>
</dbReference>
<dbReference type="SMR" id="Q04TB1"/>
<dbReference type="KEGG" id="lbj:LBJ_1274"/>
<dbReference type="HOGENOM" id="CLU_023625_3_1_12"/>
<dbReference type="Proteomes" id="UP000000656">
    <property type="component" value="Chromosome 1"/>
</dbReference>
<dbReference type="GO" id="GO:0005737">
    <property type="term" value="C:cytoplasm"/>
    <property type="evidence" value="ECO:0007669"/>
    <property type="project" value="UniProtKB-SubCell"/>
</dbReference>
<dbReference type="GO" id="GO:0009318">
    <property type="term" value="C:exodeoxyribonuclease VII complex"/>
    <property type="evidence" value="ECO:0007669"/>
    <property type="project" value="InterPro"/>
</dbReference>
<dbReference type="GO" id="GO:0008855">
    <property type="term" value="F:exodeoxyribonuclease VII activity"/>
    <property type="evidence" value="ECO:0007669"/>
    <property type="project" value="UniProtKB-UniRule"/>
</dbReference>
<dbReference type="GO" id="GO:0003676">
    <property type="term" value="F:nucleic acid binding"/>
    <property type="evidence" value="ECO:0007669"/>
    <property type="project" value="InterPro"/>
</dbReference>
<dbReference type="GO" id="GO:0006308">
    <property type="term" value="P:DNA catabolic process"/>
    <property type="evidence" value="ECO:0007669"/>
    <property type="project" value="UniProtKB-UniRule"/>
</dbReference>
<dbReference type="CDD" id="cd04489">
    <property type="entry name" value="ExoVII_LU_OBF"/>
    <property type="match status" value="1"/>
</dbReference>
<dbReference type="Gene3D" id="2.40.50.1010">
    <property type="match status" value="1"/>
</dbReference>
<dbReference type="HAMAP" id="MF_00378">
    <property type="entry name" value="Exonuc_7_L"/>
    <property type="match status" value="1"/>
</dbReference>
<dbReference type="InterPro" id="IPR003753">
    <property type="entry name" value="Exonuc_VII_L"/>
</dbReference>
<dbReference type="InterPro" id="IPR020579">
    <property type="entry name" value="Exonuc_VII_lsu_C"/>
</dbReference>
<dbReference type="InterPro" id="IPR025824">
    <property type="entry name" value="OB-fold_nuc-bd_dom"/>
</dbReference>
<dbReference type="NCBIfam" id="TIGR00237">
    <property type="entry name" value="xseA"/>
    <property type="match status" value="1"/>
</dbReference>
<dbReference type="PANTHER" id="PTHR30008">
    <property type="entry name" value="EXODEOXYRIBONUCLEASE 7 LARGE SUBUNIT"/>
    <property type="match status" value="1"/>
</dbReference>
<dbReference type="PANTHER" id="PTHR30008:SF0">
    <property type="entry name" value="EXODEOXYRIBONUCLEASE 7 LARGE SUBUNIT"/>
    <property type="match status" value="1"/>
</dbReference>
<dbReference type="Pfam" id="PF02601">
    <property type="entry name" value="Exonuc_VII_L"/>
    <property type="match status" value="1"/>
</dbReference>
<dbReference type="Pfam" id="PF13742">
    <property type="entry name" value="tRNA_anti_2"/>
    <property type="match status" value="1"/>
</dbReference>
<keyword id="KW-0963">Cytoplasm</keyword>
<keyword id="KW-0269">Exonuclease</keyword>
<keyword id="KW-0378">Hydrolase</keyword>
<keyword id="KW-0540">Nuclease</keyword>
<organism>
    <name type="scientific">Leptospira borgpetersenii serovar Hardjo-bovis (strain JB197)</name>
    <dbReference type="NCBI Taxonomy" id="355277"/>
    <lineage>
        <taxon>Bacteria</taxon>
        <taxon>Pseudomonadati</taxon>
        <taxon>Spirochaetota</taxon>
        <taxon>Spirochaetia</taxon>
        <taxon>Leptospirales</taxon>
        <taxon>Leptospiraceae</taxon>
        <taxon>Leptospira</taxon>
    </lineage>
</organism>